<reference key="1">
    <citation type="journal article" date="2007" name="Nat. Biotechnol.">
        <title>Complete genome sequence of the myxobacterium Sorangium cellulosum.</title>
        <authorList>
            <person name="Schneiker S."/>
            <person name="Perlova O."/>
            <person name="Kaiser O."/>
            <person name="Gerth K."/>
            <person name="Alici A."/>
            <person name="Altmeyer M.O."/>
            <person name="Bartels D."/>
            <person name="Bekel T."/>
            <person name="Beyer S."/>
            <person name="Bode E."/>
            <person name="Bode H.B."/>
            <person name="Bolten C.J."/>
            <person name="Choudhuri J.V."/>
            <person name="Doss S."/>
            <person name="Elnakady Y.A."/>
            <person name="Frank B."/>
            <person name="Gaigalat L."/>
            <person name="Goesmann A."/>
            <person name="Groeger C."/>
            <person name="Gross F."/>
            <person name="Jelsbak L."/>
            <person name="Jelsbak L."/>
            <person name="Kalinowski J."/>
            <person name="Kegler C."/>
            <person name="Knauber T."/>
            <person name="Konietzny S."/>
            <person name="Kopp M."/>
            <person name="Krause L."/>
            <person name="Krug D."/>
            <person name="Linke B."/>
            <person name="Mahmud T."/>
            <person name="Martinez-Arias R."/>
            <person name="McHardy A.C."/>
            <person name="Merai M."/>
            <person name="Meyer F."/>
            <person name="Mormann S."/>
            <person name="Munoz-Dorado J."/>
            <person name="Perez J."/>
            <person name="Pradella S."/>
            <person name="Rachid S."/>
            <person name="Raddatz G."/>
            <person name="Rosenau F."/>
            <person name="Rueckert C."/>
            <person name="Sasse F."/>
            <person name="Scharfe M."/>
            <person name="Schuster S.C."/>
            <person name="Suen G."/>
            <person name="Treuner-Lange A."/>
            <person name="Velicer G.J."/>
            <person name="Vorholter F.-J."/>
            <person name="Weissman K.J."/>
            <person name="Welch R.D."/>
            <person name="Wenzel S.C."/>
            <person name="Whitworth D.E."/>
            <person name="Wilhelm S."/>
            <person name="Wittmann C."/>
            <person name="Bloecker H."/>
            <person name="Puehler A."/>
            <person name="Mueller R."/>
        </authorList>
    </citation>
    <scope>NUCLEOTIDE SEQUENCE [LARGE SCALE GENOMIC DNA]</scope>
    <source>
        <strain>So ce56</strain>
    </source>
</reference>
<dbReference type="EC" id="2.1.1.192" evidence="1"/>
<dbReference type="EMBL" id="AM746676">
    <property type="protein sequence ID" value="CAN94998.1"/>
    <property type="molecule type" value="Genomic_DNA"/>
</dbReference>
<dbReference type="RefSeq" id="WP_012237467.1">
    <property type="nucleotide sequence ID" value="NC_010162.1"/>
</dbReference>
<dbReference type="SMR" id="A9FFJ6"/>
<dbReference type="STRING" id="448385.sce4835"/>
<dbReference type="KEGG" id="scl:sce4835"/>
<dbReference type="eggNOG" id="COG0820">
    <property type="taxonomic scope" value="Bacteria"/>
</dbReference>
<dbReference type="HOGENOM" id="CLU_029101_0_0_7"/>
<dbReference type="OrthoDB" id="9793973at2"/>
<dbReference type="BioCyc" id="SCEL448385:SCE_RS24815-MONOMER"/>
<dbReference type="Proteomes" id="UP000002139">
    <property type="component" value="Chromosome"/>
</dbReference>
<dbReference type="GO" id="GO:0005737">
    <property type="term" value="C:cytoplasm"/>
    <property type="evidence" value="ECO:0007669"/>
    <property type="project" value="UniProtKB-SubCell"/>
</dbReference>
<dbReference type="GO" id="GO:0051539">
    <property type="term" value="F:4 iron, 4 sulfur cluster binding"/>
    <property type="evidence" value="ECO:0007669"/>
    <property type="project" value="UniProtKB-UniRule"/>
</dbReference>
<dbReference type="GO" id="GO:0046872">
    <property type="term" value="F:metal ion binding"/>
    <property type="evidence" value="ECO:0007669"/>
    <property type="project" value="UniProtKB-KW"/>
</dbReference>
<dbReference type="GO" id="GO:0070040">
    <property type="term" value="F:rRNA (adenine(2503)-C2-)-methyltransferase activity"/>
    <property type="evidence" value="ECO:0007669"/>
    <property type="project" value="UniProtKB-UniRule"/>
</dbReference>
<dbReference type="GO" id="GO:0019843">
    <property type="term" value="F:rRNA binding"/>
    <property type="evidence" value="ECO:0007669"/>
    <property type="project" value="UniProtKB-UniRule"/>
</dbReference>
<dbReference type="GO" id="GO:0002935">
    <property type="term" value="F:tRNA (adenine(37)-C2)-methyltransferase activity"/>
    <property type="evidence" value="ECO:0007669"/>
    <property type="project" value="UniProtKB-UniRule"/>
</dbReference>
<dbReference type="GO" id="GO:0000049">
    <property type="term" value="F:tRNA binding"/>
    <property type="evidence" value="ECO:0007669"/>
    <property type="project" value="UniProtKB-UniRule"/>
</dbReference>
<dbReference type="GO" id="GO:0070475">
    <property type="term" value="P:rRNA base methylation"/>
    <property type="evidence" value="ECO:0007669"/>
    <property type="project" value="UniProtKB-UniRule"/>
</dbReference>
<dbReference type="GO" id="GO:0030488">
    <property type="term" value="P:tRNA methylation"/>
    <property type="evidence" value="ECO:0007669"/>
    <property type="project" value="UniProtKB-UniRule"/>
</dbReference>
<dbReference type="CDD" id="cd01335">
    <property type="entry name" value="Radical_SAM"/>
    <property type="match status" value="1"/>
</dbReference>
<dbReference type="Gene3D" id="1.10.150.530">
    <property type="match status" value="1"/>
</dbReference>
<dbReference type="Gene3D" id="3.20.20.70">
    <property type="entry name" value="Aldolase class I"/>
    <property type="match status" value="1"/>
</dbReference>
<dbReference type="HAMAP" id="MF_01849">
    <property type="entry name" value="RNA_methyltr_RlmN"/>
    <property type="match status" value="1"/>
</dbReference>
<dbReference type="InterPro" id="IPR013785">
    <property type="entry name" value="Aldolase_TIM"/>
</dbReference>
<dbReference type="InterPro" id="IPR040072">
    <property type="entry name" value="Methyltransferase_A"/>
</dbReference>
<dbReference type="InterPro" id="IPR048641">
    <property type="entry name" value="RlmN_N"/>
</dbReference>
<dbReference type="InterPro" id="IPR027492">
    <property type="entry name" value="RNA_MTrfase_RlmN"/>
</dbReference>
<dbReference type="InterPro" id="IPR004383">
    <property type="entry name" value="rRNA_lsu_MTrfase_RlmN/Cfr"/>
</dbReference>
<dbReference type="InterPro" id="IPR007197">
    <property type="entry name" value="rSAM"/>
</dbReference>
<dbReference type="NCBIfam" id="TIGR00048">
    <property type="entry name" value="rRNA_mod_RlmN"/>
    <property type="match status" value="1"/>
</dbReference>
<dbReference type="PANTHER" id="PTHR30544">
    <property type="entry name" value="23S RRNA METHYLTRANSFERASE"/>
    <property type="match status" value="1"/>
</dbReference>
<dbReference type="PANTHER" id="PTHR30544:SF5">
    <property type="entry name" value="RADICAL SAM CORE DOMAIN-CONTAINING PROTEIN"/>
    <property type="match status" value="1"/>
</dbReference>
<dbReference type="Pfam" id="PF04055">
    <property type="entry name" value="Radical_SAM"/>
    <property type="match status" value="1"/>
</dbReference>
<dbReference type="Pfam" id="PF21016">
    <property type="entry name" value="RlmN_N"/>
    <property type="match status" value="1"/>
</dbReference>
<dbReference type="PIRSF" id="PIRSF006004">
    <property type="entry name" value="CHP00048"/>
    <property type="match status" value="1"/>
</dbReference>
<dbReference type="SFLD" id="SFLDF00275">
    <property type="entry name" value="adenosine_C2_methyltransferase"/>
    <property type="match status" value="1"/>
</dbReference>
<dbReference type="SFLD" id="SFLDG01062">
    <property type="entry name" value="methyltransferase_(Class_A)"/>
    <property type="match status" value="1"/>
</dbReference>
<dbReference type="SUPFAM" id="SSF102114">
    <property type="entry name" value="Radical SAM enzymes"/>
    <property type="match status" value="1"/>
</dbReference>
<dbReference type="PROSITE" id="PS51918">
    <property type="entry name" value="RADICAL_SAM"/>
    <property type="match status" value="1"/>
</dbReference>
<proteinExistence type="inferred from homology"/>
<name>RLMN_SORC5</name>
<protein>
    <recommendedName>
        <fullName evidence="1">Dual-specificity RNA methyltransferase RlmN</fullName>
        <ecNumber evidence="1">2.1.1.192</ecNumber>
    </recommendedName>
    <alternativeName>
        <fullName evidence="1">23S rRNA (adenine(2503)-C(2))-methyltransferase</fullName>
    </alternativeName>
    <alternativeName>
        <fullName evidence="1">23S rRNA m2A2503 methyltransferase</fullName>
    </alternativeName>
    <alternativeName>
        <fullName evidence="1">Ribosomal RNA large subunit methyltransferase N</fullName>
    </alternativeName>
    <alternativeName>
        <fullName evidence="1">tRNA (adenine(37)-C(2))-methyltransferase</fullName>
    </alternativeName>
    <alternativeName>
        <fullName evidence="1">tRNA m2A37 methyltransferase</fullName>
    </alternativeName>
</protein>
<keyword id="KW-0004">4Fe-4S</keyword>
<keyword id="KW-0963">Cytoplasm</keyword>
<keyword id="KW-1015">Disulfide bond</keyword>
<keyword id="KW-0408">Iron</keyword>
<keyword id="KW-0411">Iron-sulfur</keyword>
<keyword id="KW-0479">Metal-binding</keyword>
<keyword id="KW-0489">Methyltransferase</keyword>
<keyword id="KW-1185">Reference proteome</keyword>
<keyword id="KW-0698">rRNA processing</keyword>
<keyword id="KW-0949">S-adenosyl-L-methionine</keyword>
<keyword id="KW-0808">Transferase</keyword>
<keyword id="KW-0819">tRNA processing</keyword>
<accession>A9FFJ6</accession>
<sequence length="389" mass="41882">MRSTPLHPVARLPEEWSASLAARGERSFTAKQVFQWIHRRGVLDPAAMTNLPARLREHLAAEGLGEVLTPERVHRSEDGTRKLLLRLRDGATIETVLLPSVSGPGSQAQLDADAAAALDDDEDDDAAAEAGAAPRVRVTQCISTQVGCAMGCGFCASGVAGLKRHLGAEEIAGQVLLGRAMLEEGEELRNVVYMGMGEPLHNYEATARSLRLLTHPEGINLSTRRVTVSTSGLVPEIARLGADFGGQIALAISLHAADDETRSALMPINRKHPLDELLAALRAYPLPRRRRITIEYTLVAGQNDDPAEARRLAKLLRGLPVKINLIPMNPIEASSLGPPAQERVAAFQEVLTQAGYSCFVRRRRGDDVSAACGQLVLLGAKPKVRRALG</sequence>
<organism>
    <name type="scientific">Sorangium cellulosum (strain So ce56)</name>
    <name type="common">Polyangium cellulosum (strain So ce56)</name>
    <dbReference type="NCBI Taxonomy" id="448385"/>
    <lineage>
        <taxon>Bacteria</taxon>
        <taxon>Pseudomonadati</taxon>
        <taxon>Myxococcota</taxon>
        <taxon>Polyangia</taxon>
        <taxon>Polyangiales</taxon>
        <taxon>Polyangiaceae</taxon>
        <taxon>Sorangium</taxon>
    </lineage>
</organism>
<gene>
    <name evidence="1" type="primary">rlmN</name>
    <name type="ordered locus">sce4835</name>
</gene>
<comment type="function">
    <text evidence="1">Specifically methylates position 2 of adenine 2503 in 23S rRNA and position 2 of adenine 37 in tRNAs. m2A2503 modification seems to play a crucial role in the proofreading step occurring at the peptidyl transferase center and thus would serve to optimize ribosomal fidelity.</text>
</comment>
<comment type="catalytic activity">
    <reaction evidence="1">
        <text>adenosine(2503) in 23S rRNA + 2 reduced [2Fe-2S]-[ferredoxin] + 2 S-adenosyl-L-methionine = 2-methyladenosine(2503) in 23S rRNA + 5'-deoxyadenosine + L-methionine + 2 oxidized [2Fe-2S]-[ferredoxin] + S-adenosyl-L-homocysteine</text>
        <dbReference type="Rhea" id="RHEA:42916"/>
        <dbReference type="Rhea" id="RHEA-COMP:10000"/>
        <dbReference type="Rhea" id="RHEA-COMP:10001"/>
        <dbReference type="Rhea" id="RHEA-COMP:10152"/>
        <dbReference type="Rhea" id="RHEA-COMP:10282"/>
        <dbReference type="ChEBI" id="CHEBI:17319"/>
        <dbReference type="ChEBI" id="CHEBI:33737"/>
        <dbReference type="ChEBI" id="CHEBI:33738"/>
        <dbReference type="ChEBI" id="CHEBI:57844"/>
        <dbReference type="ChEBI" id="CHEBI:57856"/>
        <dbReference type="ChEBI" id="CHEBI:59789"/>
        <dbReference type="ChEBI" id="CHEBI:74411"/>
        <dbReference type="ChEBI" id="CHEBI:74497"/>
        <dbReference type="EC" id="2.1.1.192"/>
    </reaction>
</comment>
<comment type="catalytic activity">
    <reaction evidence="1">
        <text>adenosine(37) in tRNA + 2 reduced [2Fe-2S]-[ferredoxin] + 2 S-adenosyl-L-methionine = 2-methyladenosine(37) in tRNA + 5'-deoxyadenosine + L-methionine + 2 oxidized [2Fe-2S]-[ferredoxin] + S-adenosyl-L-homocysteine</text>
        <dbReference type="Rhea" id="RHEA:43332"/>
        <dbReference type="Rhea" id="RHEA-COMP:10000"/>
        <dbReference type="Rhea" id="RHEA-COMP:10001"/>
        <dbReference type="Rhea" id="RHEA-COMP:10162"/>
        <dbReference type="Rhea" id="RHEA-COMP:10485"/>
        <dbReference type="ChEBI" id="CHEBI:17319"/>
        <dbReference type="ChEBI" id="CHEBI:33737"/>
        <dbReference type="ChEBI" id="CHEBI:33738"/>
        <dbReference type="ChEBI" id="CHEBI:57844"/>
        <dbReference type="ChEBI" id="CHEBI:57856"/>
        <dbReference type="ChEBI" id="CHEBI:59789"/>
        <dbReference type="ChEBI" id="CHEBI:74411"/>
        <dbReference type="ChEBI" id="CHEBI:74497"/>
        <dbReference type="EC" id="2.1.1.192"/>
    </reaction>
</comment>
<comment type="cofactor">
    <cofactor evidence="1">
        <name>[4Fe-4S] cluster</name>
        <dbReference type="ChEBI" id="CHEBI:49883"/>
    </cofactor>
    <text evidence="1">Binds 1 [4Fe-4S] cluster. The cluster is coordinated with 3 cysteines and an exchangeable S-adenosyl-L-methionine.</text>
</comment>
<comment type="subcellular location">
    <subcellularLocation>
        <location evidence="1">Cytoplasm</location>
    </subcellularLocation>
</comment>
<comment type="miscellaneous">
    <text evidence="1">Reaction proceeds by a ping-pong mechanism involving intermediate methylation of a conserved cysteine residue.</text>
</comment>
<comment type="similarity">
    <text evidence="1">Belongs to the radical SAM superfamily. RlmN family.</text>
</comment>
<evidence type="ECO:0000255" key="1">
    <source>
        <dbReference type="HAMAP-Rule" id="MF_01849"/>
    </source>
</evidence>
<evidence type="ECO:0000255" key="2">
    <source>
        <dbReference type="PROSITE-ProRule" id="PRU01266"/>
    </source>
</evidence>
<feature type="chain" id="PRO_0000350422" description="Dual-specificity RNA methyltransferase RlmN">
    <location>
        <begin position="1"/>
        <end position="389"/>
    </location>
</feature>
<feature type="domain" description="Radical SAM core" evidence="2">
    <location>
        <begin position="134"/>
        <end position="367"/>
    </location>
</feature>
<feature type="active site" description="Proton acceptor" evidence="1">
    <location>
        <position position="94"/>
    </location>
</feature>
<feature type="active site" description="S-methylcysteine intermediate" evidence="1">
    <location>
        <position position="372"/>
    </location>
</feature>
<feature type="binding site" evidence="1">
    <location>
        <position position="148"/>
    </location>
    <ligand>
        <name>[4Fe-4S] cluster</name>
        <dbReference type="ChEBI" id="CHEBI:49883"/>
        <note>4Fe-4S-S-AdoMet</note>
    </ligand>
</feature>
<feature type="binding site" evidence="1">
    <location>
        <position position="152"/>
    </location>
    <ligand>
        <name>[4Fe-4S] cluster</name>
        <dbReference type="ChEBI" id="CHEBI:49883"/>
        <note>4Fe-4S-S-AdoMet</note>
    </ligand>
</feature>
<feature type="binding site" evidence="1">
    <location>
        <position position="155"/>
    </location>
    <ligand>
        <name>[4Fe-4S] cluster</name>
        <dbReference type="ChEBI" id="CHEBI:49883"/>
        <note>4Fe-4S-S-AdoMet</note>
    </ligand>
</feature>
<feature type="binding site" evidence="1">
    <location>
        <begin position="197"/>
        <end position="198"/>
    </location>
    <ligand>
        <name>S-adenosyl-L-methionine</name>
        <dbReference type="ChEBI" id="CHEBI:59789"/>
    </ligand>
</feature>
<feature type="binding site" evidence="1">
    <location>
        <position position="229"/>
    </location>
    <ligand>
        <name>S-adenosyl-L-methionine</name>
        <dbReference type="ChEBI" id="CHEBI:59789"/>
    </ligand>
</feature>
<feature type="binding site" evidence="1">
    <location>
        <begin position="253"/>
        <end position="255"/>
    </location>
    <ligand>
        <name>S-adenosyl-L-methionine</name>
        <dbReference type="ChEBI" id="CHEBI:59789"/>
    </ligand>
</feature>
<feature type="binding site" evidence="1">
    <location>
        <position position="329"/>
    </location>
    <ligand>
        <name>S-adenosyl-L-methionine</name>
        <dbReference type="ChEBI" id="CHEBI:59789"/>
    </ligand>
</feature>
<feature type="disulfide bond" description="(transient)" evidence="1">
    <location>
        <begin position="141"/>
        <end position="372"/>
    </location>
</feature>